<organism>
    <name type="scientific">Cereibacter sphaeroides (strain ATCC 17023 / DSM 158 / JCM 6121 / CCUG 31486 / LMG 2827 / NBRC 12203 / NCIMB 8253 / ATH 2.4.1.)</name>
    <name type="common">Rhodobacter sphaeroides</name>
    <dbReference type="NCBI Taxonomy" id="272943"/>
    <lineage>
        <taxon>Bacteria</taxon>
        <taxon>Pseudomonadati</taxon>
        <taxon>Pseudomonadota</taxon>
        <taxon>Alphaproteobacteria</taxon>
        <taxon>Rhodobacterales</taxon>
        <taxon>Paracoccaceae</taxon>
        <taxon>Cereibacter</taxon>
    </lineage>
</organism>
<protein>
    <recommendedName>
        <fullName evidence="1">Small ribosomal subunit protein uS13</fullName>
    </recommendedName>
    <alternativeName>
        <fullName evidence="3">30S ribosomal protein S13</fullName>
    </alternativeName>
</protein>
<accession>Q3J5Q0</accession>
<proteinExistence type="inferred from homology"/>
<sequence length="122" mass="13505">MARIAGVNIPTAKRVPIALTYIHGIGDFVAGQICDAVGIDRARRVNELSDAEVLSIREYIDANVTVEGDLRRETSMNIKRLMDLGCYRGLRHRRGLPVRGQRTHTNARTRKGPAKAIAGKKK</sequence>
<feature type="chain" id="PRO_0000230557" description="Small ribosomal subunit protein uS13">
    <location>
        <begin position="1"/>
        <end position="122"/>
    </location>
</feature>
<feature type="region of interest" description="Disordered" evidence="2">
    <location>
        <begin position="99"/>
        <end position="122"/>
    </location>
</feature>
<reference key="1">
    <citation type="submission" date="2005-09" db="EMBL/GenBank/DDBJ databases">
        <title>Complete sequence of chromosome 1 of Rhodobacter sphaeroides 2.4.1.</title>
        <authorList>
            <person name="Copeland A."/>
            <person name="Lucas S."/>
            <person name="Lapidus A."/>
            <person name="Barry K."/>
            <person name="Detter J.C."/>
            <person name="Glavina T."/>
            <person name="Hammon N."/>
            <person name="Israni S."/>
            <person name="Pitluck S."/>
            <person name="Richardson P."/>
            <person name="Mackenzie C."/>
            <person name="Choudhary M."/>
            <person name="Larimer F."/>
            <person name="Hauser L.J."/>
            <person name="Land M."/>
            <person name="Donohue T.J."/>
            <person name="Kaplan S."/>
        </authorList>
    </citation>
    <scope>NUCLEOTIDE SEQUENCE [LARGE SCALE GENOMIC DNA]</scope>
    <source>
        <strain>ATCC 17023 / DSM 158 / JCM 6121 / CCUG 31486 / LMG 2827 / NBRC 12203 / NCIMB 8253 / ATH 2.4.1.</strain>
    </source>
</reference>
<evidence type="ECO:0000255" key="1">
    <source>
        <dbReference type="HAMAP-Rule" id="MF_01315"/>
    </source>
</evidence>
<evidence type="ECO:0000256" key="2">
    <source>
        <dbReference type="SAM" id="MobiDB-lite"/>
    </source>
</evidence>
<evidence type="ECO:0000305" key="3"/>
<gene>
    <name evidence="1" type="primary">rpsM</name>
    <name type="ordered locus">RHOS4_03160</name>
    <name type="ORF">RSP_1737</name>
</gene>
<name>RS13_CERS4</name>
<keyword id="KW-1185">Reference proteome</keyword>
<keyword id="KW-0687">Ribonucleoprotein</keyword>
<keyword id="KW-0689">Ribosomal protein</keyword>
<keyword id="KW-0694">RNA-binding</keyword>
<keyword id="KW-0699">rRNA-binding</keyword>
<keyword id="KW-0820">tRNA-binding</keyword>
<comment type="function">
    <text evidence="1">Located at the top of the head of the 30S subunit, it contacts several helices of the 16S rRNA. In the 70S ribosome it contacts the 23S rRNA (bridge B1a) and protein L5 of the 50S subunit (bridge B1b), connecting the 2 subunits; these bridges are implicated in subunit movement. Contacts the tRNAs in the A and P-sites.</text>
</comment>
<comment type="subunit">
    <text evidence="1">Part of the 30S ribosomal subunit. Forms a loose heterodimer with protein S19. Forms two bridges to the 50S subunit in the 70S ribosome.</text>
</comment>
<comment type="similarity">
    <text evidence="1">Belongs to the universal ribosomal protein uS13 family.</text>
</comment>
<dbReference type="EMBL" id="CP000143">
    <property type="protein sequence ID" value="ABA77884.1"/>
    <property type="molecule type" value="Genomic_DNA"/>
</dbReference>
<dbReference type="RefSeq" id="WP_002722532.1">
    <property type="nucleotide sequence ID" value="NZ_CP030271.1"/>
</dbReference>
<dbReference type="RefSeq" id="YP_351785.1">
    <property type="nucleotide sequence ID" value="NC_007493.2"/>
</dbReference>
<dbReference type="SMR" id="Q3J5Q0"/>
<dbReference type="STRING" id="272943.RSP_1737"/>
<dbReference type="EnsemblBacteria" id="ABA77884">
    <property type="protein sequence ID" value="ABA77884"/>
    <property type="gene ID" value="RSP_1737"/>
</dbReference>
<dbReference type="GeneID" id="67445522"/>
<dbReference type="KEGG" id="rsp:RSP_1737"/>
<dbReference type="PATRIC" id="fig|272943.9.peg.615"/>
<dbReference type="eggNOG" id="COG0099">
    <property type="taxonomic scope" value="Bacteria"/>
</dbReference>
<dbReference type="OrthoDB" id="9803610at2"/>
<dbReference type="PhylomeDB" id="Q3J5Q0"/>
<dbReference type="Proteomes" id="UP000002703">
    <property type="component" value="Chromosome 1"/>
</dbReference>
<dbReference type="GO" id="GO:0005829">
    <property type="term" value="C:cytosol"/>
    <property type="evidence" value="ECO:0007669"/>
    <property type="project" value="TreeGrafter"/>
</dbReference>
<dbReference type="GO" id="GO:0015935">
    <property type="term" value="C:small ribosomal subunit"/>
    <property type="evidence" value="ECO:0007669"/>
    <property type="project" value="TreeGrafter"/>
</dbReference>
<dbReference type="GO" id="GO:0019843">
    <property type="term" value="F:rRNA binding"/>
    <property type="evidence" value="ECO:0007669"/>
    <property type="project" value="UniProtKB-UniRule"/>
</dbReference>
<dbReference type="GO" id="GO:0003735">
    <property type="term" value="F:structural constituent of ribosome"/>
    <property type="evidence" value="ECO:0007669"/>
    <property type="project" value="InterPro"/>
</dbReference>
<dbReference type="GO" id="GO:0000049">
    <property type="term" value="F:tRNA binding"/>
    <property type="evidence" value="ECO:0007669"/>
    <property type="project" value="UniProtKB-UniRule"/>
</dbReference>
<dbReference type="GO" id="GO:0006412">
    <property type="term" value="P:translation"/>
    <property type="evidence" value="ECO:0007669"/>
    <property type="project" value="UniProtKB-UniRule"/>
</dbReference>
<dbReference type="FunFam" id="1.10.8.50:FF:000001">
    <property type="entry name" value="30S ribosomal protein S13"/>
    <property type="match status" value="1"/>
</dbReference>
<dbReference type="FunFam" id="4.10.910.10:FF:000001">
    <property type="entry name" value="30S ribosomal protein S13"/>
    <property type="match status" value="1"/>
</dbReference>
<dbReference type="Gene3D" id="1.10.8.50">
    <property type="match status" value="1"/>
</dbReference>
<dbReference type="Gene3D" id="4.10.910.10">
    <property type="entry name" value="30s ribosomal protein s13, domain 2"/>
    <property type="match status" value="1"/>
</dbReference>
<dbReference type="HAMAP" id="MF_01315">
    <property type="entry name" value="Ribosomal_uS13"/>
    <property type="match status" value="1"/>
</dbReference>
<dbReference type="InterPro" id="IPR027437">
    <property type="entry name" value="Rbsml_uS13_C"/>
</dbReference>
<dbReference type="InterPro" id="IPR001892">
    <property type="entry name" value="Ribosomal_uS13"/>
</dbReference>
<dbReference type="InterPro" id="IPR010979">
    <property type="entry name" value="Ribosomal_uS13-like_H2TH"/>
</dbReference>
<dbReference type="InterPro" id="IPR019980">
    <property type="entry name" value="Ribosomal_uS13_bac-type"/>
</dbReference>
<dbReference type="InterPro" id="IPR018269">
    <property type="entry name" value="Ribosomal_uS13_CS"/>
</dbReference>
<dbReference type="NCBIfam" id="TIGR03631">
    <property type="entry name" value="uS13_bact"/>
    <property type="match status" value="1"/>
</dbReference>
<dbReference type="PANTHER" id="PTHR10871">
    <property type="entry name" value="30S RIBOSOMAL PROTEIN S13/40S RIBOSOMAL PROTEIN S18"/>
    <property type="match status" value="1"/>
</dbReference>
<dbReference type="PANTHER" id="PTHR10871:SF1">
    <property type="entry name" value="SMALL RIBOSOMAL SUBUNIT PROTEIN US13M"/>
    <property type="match status" value="1"/>
</dbReference>
<dbReference type="Pfam" id="PF00416">
    <property type="entry name" value="Ribosomal_S13"/>
    <property type="match status" value="1"/>
</dbReference>
<dbReference type="PIRSF" id="PIRSF002134">
    <property type="entry name" value="Ribosomal_S13"/>
    <property type="match status" value="1"/>
</dbReference>
<dbReference type="SUPFAM" id="SSF46946">
    <property type="entry name" value="S13-like H2TH domain"/>
    <property type="match status" value="1"/>
</dbReference>
<dbReference type="PROSITE" id="PS00646">
    <property type="entry name" value="RIBOSOMAL_S13_1"/>
    <property type="match status" value="1"/>
</dbReference>
<dbReference type="PROSITE" id="PS50159">
    <property type="entry name" value="RIBOSOMAL_S13_2"/>
    <property type="match status" value="1"/>
</dbReference>